<evidence type="ECO:0000255" key="1">
    <source>
        <dbReference type="HAMAP-Rule" id="MF_02208"/>
    </source>
</evidence>
<reference key="1">
    <citation type="journal article" date="2005" name="J. Bacteriol.">
        <title>Insights into genome plasticity and pathogenicity of the plant pathogenic Bacterium Xanthomonas campestris pv. vesicatoria revealed by the complete genome sequence.</title>
        <authorList>
            <person name="Thieme F."/>
            <person name="Koebnik R."/>
            <person name="Bekel T."/>
            <person name="Berger C."/>
            <person name="Boch J."/>
            <person name="Buettner D."/>
            <person name="Caldana C."/>
            <person name="Gaigalat L."/>
            <person name="Goesmann A."/>
            <person name="Kay S."/>
            <person name="Kirchner O."/>
            <person name="Lanz C."/>
            <person name="Linke B."/>
            <person name="McHardy A.C."/>
            <person name="Meyer F."/>
            <person name="Mittenhuber G."/>
            <person name="Nies D.H."/>
            <person name="Niesbach-Kloesgen U."/>
            <person name="Patschkowski T."/>
            <person name="Rueckert C."/>
            <person name="Rupp O."/>
            <person name="Schneiker S."/>
            <person name="Schuster S.C."/>
            <person name="Vorhoelter F.J."/>
            <person name="Weber E."/>
            <person name="Puehler A."/>
            <person name="Bonas U."/>
            <person name="Bartels D."/>
            <person name="Kaiser O."/>
        </authorList>
    </citation>
    <scope>NUCLEOTIDE SEQUENCE [LARGE SCALE GENOMIC DNA]</scope>
    <source>
        <strain>85-10</strain>
    </source>
</reference>
<accession>Q3BR29</accession>
<protein>
    <recommendedName>
        <fullName evidence="1">UDP-N-acetylmuramoyl-L-alanine--L-glutamate ligase</fullName>
        <ecNumber evidence="1">6.3.2.53</ecNumber>
    </recommendedName>
    <alternativeName>
        <fullName evidence="1">UDP-N-acetylmuramoyl-L-alanyl-L-glutamate synthetase</fullName>
        <shortName evidence="1">UDP-MurNAc-L-Ala-L-Glu synthetase</shortName>
    </alternativeName>
</protein>
<proteinExistence type="inferred from homology"/>
<gene>
    <name evidence="1" type="primary">murD2</name>
    <name type="ordered locus">XCV3053</name>
</gene>
<feature type="chain" id="PRO_0000257262" description="UDP-N-acetylmuramoyl-L-alanine--L-glutamate ligase">
    <location>
        <begin position="1"/>
        <end position="468"/>
    </location>
</feature>
<feature type="binding site" evidence="1">
    <location>
        <begin position="122"/>
        <end position="128"/>
    </location>
    <ligand>
        <name>ATP</name>
        <dbReference type="ChEBI" id="CHEBI:30616"/>
    </ligand>
</feature>
<keyword id="KW-0067">ATP-binding</keyword>
<keyword id="KW-0131">Cell cycle</keyword>
<keyword id="KW-0132">Cell division</keyword>
<keyword id="KW-0133">Cell shape</keyword>
<keyword id="KW-0961">Cell wall biogenesis/degradation</keyword>
<keyword id="KW-0963">Cytoplasm</keyword>
<keyword id="KW-0436">Ligase</keyword>
<keyword id="KW-0547">Nucleotide-binding</keyword>
<keyword id="KW-0573">Peptidoglycan synthesis</keyword>
<sequence>MRISQLEGKTVALWGWGREGRAAYRALRTRLPTQALTVFCNAEEAREIDALEDAALQVETAASAQALGRFEIVVKSPGISPYRAEALVAAAQGTCFIGGTALWFAEHAQADGSVPGVICVTGTKGKSTTTALLAHLLRAAGHRTALVGNIGQPLLEVLAPQPPPAYWAIELSSYQTGDVGRSGARPELALVLNLFPEHLDWHGDEARYVRDKLSLVTEGRPRIALLNAADPLLAGLQLPDSQVRWFNHSAGWHLRGDVVYRGEQAIFDTADVPLPGEHNRRNLCAVLAAVEALGLDAAALAPAAASFRPLPNRLQLLGSVDGISYVNDSISTTPHASLAALACFAQRRVALLVGGHDRGLDWHDFAQQMARQAPLEIVTMGANGPRIHALLAPLAEAGHFGLHAANDLEHAMGLARAALGQQGGVVLLSPGAPSFGAYSDYVARGRHFAQLAGFDPAAISAIDGLGVH</sequence>
<comment type="function">
    <text evidence="1">Cell wall formation. Catalyzes the addition of L-glutamate to the nucleotide precursor UDP-N-acetylmuramoyl-L-alanine.</text>
</comment>
<comment type="catalytic activity">
    <reaction evidence="1">
        <text>UDP-N-acetyl-alpha-D-muramoyl-L-alanine + L-glutamate + ATP = UDP-N-acetyl-alpha-D-muramoyl-L-alanyl-L-glutamate + ADP + phosphate + H(+)</text>
        <dbReference type="Rhea" id="RHEA:58816"/>
        <dbReference type="ChEBI" id="CHEBI:15378"/>
        <dbReference type="ChEBI" id="CHEBI:29985"/>
        <dbReference type="ChEBI" id="CHEBI:30616"/>
        <dbReference type="ChEBI" id="CHEBI:43474"/>
        <dbReference type="ChEBI" id="CHEBI:83898"/>
        <dbReference type="ChEBI" id="CHEBI:142725"/>
        <dbReference type="ChEBI" id="CHEBI:456216"/>
        <dbReference type="EC" id="6.3.2.53"/>
    </reaction>
</comment>
<comment type="pathway">
    <text evidence="1">Cell wall biogenesis; peptidoglycan biosynthesis.</text>
</comment>
<comment type="subcellular location">
    <subcellularLocation>
        <location evidence="1">Cytoplasm</location>
    </subcellularLocation>
</comment>
<comment type="similarity">
    <text evidence="1">Belongs to the MurCDEF family. MurD2 subfamily.</text>
</comment>
<organism>
    <name type="scientific">Xanthomonas euvesicatoria pv. vesicatoria (strain 85-10)</name>
    <name type="common">Xanthomonas campestris pv. vesicatoria</name>
    <dbReference type="NCBI Taxonomy" id="316273"/>
    <lineage>
        <taxon>Bacteria</taxon>
        <taxon>Pseudomonadati</taxon>
        <taxon>Pseudomonadota</taxon>
        <taxon>Gammaproteobacteria</taxon>
        <taxon>Lysobacterales</taxon>
        <taxon>Lysobacteraceae</taxon>
        <taxon>Xanthomonas</taxon>
    </lineage>
</organism>
<dbReference type="EC" id="6.3.2.53" evidence="1"/>
<dbReference type="EMBL" id="AM039952">
    <property type="protein sequence ID" value="CAJ24772.1"/>
    <property type="molecule type" value="Genomic_DNA"/>
</dbReference>
<dbReference type="SMR" id="Q3BR29"/>
<dbReference type="STRING" id="456327.BJD11_07565"/>
<dbReference type="KEGG" id="xcv:XCV3053"/>
<dbReference type="eggNOG" id="COG0771">
    <property type="taxonomic scope" value="Bacteria"/>
</dbReference>
<dbReference type="HOGENOM" id="CLU_032540_4_1_6"/>
<dbReference type="UniPathway" id="UPA00219"/>
<dbReference type="Proteomes" id="UP000007069">
    <property type="component" value="Chromosome"/>
</dbReference>
<dbReference type="GO" id="GO:0005737">
    <property type="term" value="C:cytoplasm"/>
    <property type="evidence" value="ECO:0007669"/>
    <property type="project" value="UniProtKB-SubCell"/>
</dbReference>
<dbReference type="GO" id="GO:0005524">
    <property type="term" value="F:ATP binding"/>
    <property type="evidence" value="ECO:0007669"/>
    <property type="project" value="UniProtKB-UniRule"/>
</dbReference>
<dbReference type="GO" id="GO:0004326">
    <property type="term" value="F:tetrahydrofolylpolyglutamate synthase activity"/>
    <property type="evidence" value="ECO:0007669"/>
    <property type="project" value="InterPro"/>
</dbReference>
<dbReference type="GO" id="GO:0008764">
    <property type="term" value="F:UDP-N-acetylmuramoylalanine-D-glutamate ligase activity"/>
    <property type="evidence" value="ECO:0007669"/>
    <property type="project" value="InterPro"/>
</dbReference>
<dbReference type="GO" id="GO:0051301">
    <property type="term" value="P:cell division"/>
    <property type="evidence" value="ECO:0007669"/>
    <property type="project" value="UniProtKB-KW"/>
</dbReference>
<dbReference type="GO" id="GO:0071555">
    <property type="term" value="P:cell wall organization"/>
    <property type="evidence" value="ECO:0007669"/>
    <property type="project" value="UniProtKB-KW"/>
</dbReference>
<dbReference type="GO" id="GO:0009252">
    <property type="term" value="P:peptidoglycan biosynthetic process"/>
    <property type="evidence" value="ECO:0007669"/>
    <property type="project" value="UniProtKB-UniRule"/>
</dbReference>
<dbReference type="GO" id="GO:0008360">
    <property type="term" value="P:regulation of cell shape"/>
    <property type="evidence" value="ECO:0007669"/>
    <property type="project" value="UniProtKB-KW"/>
</dbReference>
<dbReference type="Gene3D" id="3.90.190.20">
    <property type="entry name" value="Mur ligase, C-terminal domain"/>
    <property type="match status" value="1"/>
</dbReference>
<dbReference type="Gene3D" id="3.40.1190.10">
    <property type="entry name" value="Mur-like, catalytic domain"/>
    <property type="match status" value="1"/>
</dbReference>
<dbReference type="Gene3D" id="3.40.50.720">
    <property type="entry name" value="NAD(P)-binding Rossmann-like Domain"/>
    <property type="match status" value="1"/>
</dbReference>
<dbReference type="HAMAP" id="MF_00639">
    <property type="entry name" value="MurD"/>
    <property type="match status" value="1"/>
</dbReference>
<dbReference type="HAMAP" id="MF_02208">
    <property type="entry name" value="MurD2_subfam"/>
    <property type="match status" value="1"/>
</dbReference>
<dbReference type="InterPro" id="IPR018109">
    <property type="entry name" value="Folylpolyglutamate_synth_CS"/>
</dbReference>
<dbReference type="InterPro" id="IPR036565">
    <property type="entry name" value="Mur-like_cat_sf"/>
</dbReference>
<dbReference type="InterPro" id="IPR036615">
    <property type="entry name" value="Mur_ligase_C_dom_sf"/>
</dbReference>
<dbReference type="InterPro" id="IPR013221">
    <property type="entry name" value="Mur_ligase_cen"/>
</dbReference>
<dbReference type="InterPro" id="IPR005762">
    <property type="entry name" value="MurD"/>
</dbReference>
<dbReference type="InterPro" id="IPR043687">
    <property type="entry name" value="MurD2"/>
</dbReference>
<dbReference type="NCBIfam" id="TIGR01087">
    <property type="entry name" value="murD"/>
    <property type="match status" value="1"/>
</dbReference>
<dbReference type="PANTHER" id="PTHR43692">
    <property type="entry name" value="UDP-N-ACETYLMURAMOYLALANINE--D-GLUTAMATE LIGASE"/>
    <property type="match status" value="1"/>
</dbReference>
<dbReference type="PANTHER" id="PTHR43692:SF1">
    <property type="entry name" value="UDP-N-ACETYLMURAMOYLALANINE--D-GLUTAMATE LIGASE"/>
    <property type="match status" value="1"/>
</dbReference>
<dbReference type="Pfam" id="PF08245">
    <property type="entry name" value="Mur_ligase_M"/>
    <property type="match status" value="1"/>
</dbReference>
<dbReference type="SUPFAM" id="SSF53623">
    <property type="entry name" value="MurD-like peptide ligases, catalytic domain"/>
    <property type="match status" value="1"/>
</dbReference>
<dbReference type="SUPFAM" id="SSF53244">
    <property type="entry name" value="MurD-like peptide ligases, peptide-binding domain"/>
    <property type="match status" value="1"/>
</dbReference>
<name>MURD2_XANE5</name>